<protein>
    <recommendedName>
        <fullName evidence="1">DNA-directed RNA polymerase subunit beta</fullName>
        <ecNumber evidence="1">2.7.7.6</ecNumber>
    </recommendedName>
    <alternativeName>
        <fullName evidence="1">PEP</fullName>
    </alternativeName>
    <alternativeName>
        <fullName evidence="1">Plastid-encoded RNA polymerase subunit beta</fullName>
        <shortName evidence="1">RNA polymerase subunit beta</shortName>
    </alternativeName>
</protein>
<sequence>MGFLFSINRKLKMPRDGNEGMFTIPGFSQIQFEGFCRFIDQGLMEEFHKFPKIEDTDQEIEFQLFVERYQLVEPLIKERDAVYESLTYSSELYVPAGLIWKTGRDMQEQTIFIGNIPLMNSLGTFIVNGIYRIVINQILQSPGIYYRSELDHNGISVYTSTIISDWGGRSELEIDRKSRIWARVSRKQKISILVLSSAMGSNLREILDNVCYPEIFLSFLNDREKKKIGSKENAILEFYQQFACVGGDPVFSESLCKELQKKFFQQRCELGRIGRRNMNRRLNLDIPQSNTFLLPRDVLAAADHLIGMKFGMGTLDDMNHLKNKRIRSVADLLQDQFGLALVRLENAVRGTICGAIRHKLILTPQNLVSSTSLTTTYESFFGLHPLSQVLDRTNPLTQIVHGRKLSYLGPGGLTGRTASFRIRDIHPSHYGRICPIDTSEGINVGLIGSLAIHARIGHWGSIESPFYEVYQRSKETKMVFLSPSRDEYYTVATGNSLALNRGGIQEEQIVPARYRQEFLTIAWEQIHLRSIFPFQYFSIGASLIPFIEHNDANRALMSSNMQRQAVPLSRSEKCIVGTGLERQAALDSGVSAIAECEGKIIHTDTHKIVLSGHGDTISIPLVMYQRSNKNTCMHQNPQVRRGKCIKKGQILADGAATVGGELALGKNVLVAYMPWEGYNFEDAVLISERLVYEDIYTSFHIRKYEIQTHVTSQGPERITHEIPHLEAHLLRNLDRNGIVALGSWVETGDILVGKLTPQTANESSYAPEDRLLRAILGIQVSTAKETCLKLPIGGRGRVIDVRWIQKKGGSSYNPETIRVYISQKREIKVGDKVAGRHGNKGIISKILSRQDMPYLQDGTPVDMVFNPLGVPSRMNVGQIFECSLGLAGDLLDRHYRIAPFDERYEQEASRKLVFSELYEASKQTANPWVFEPEYPGKSRIFDGRTGDPFEQPVLIGKSYILKLIHQVDDKIHGRSSGHYALVTQQPLRGRAKQGGQRVGEMEVWALEGFGVAHILQEMLTYKSDHIRARQEVLGTTIIGGTIPTPEDAPESFRLLVRELRSLALELNHFLVSEKNFQINRKEA</sequence>
<dbReference type="EC" id="2.7.7.6" evidence="1"/>
<dbReference type="EMBL" id="EU273602">
    <property type="protein sequence ID" value="ABX38736.1"/>
    <property type="molecule type" value="Genomic_DNA"/>
</dbReference>
<dbReference type="RefSeq" id="YP_001586174.1">
    <property type="nucleotide sequence ID" value="NC_010093.1"/>
</dbReference>
<dbReference type="SMR" id="A9LYH7"/>
<dbReference type="GeneID" id="5777712"/>
<dbReference type="GO" id="GO:0009507">
    <property type="term" value="C:chloroplast"/>
    <property type="evidence" value="ECO:0007669"/>
    <property type="project" value="UniProtKB-SubCell"/>
</dbReference>
<dbReference type="GO" id="GO:0000428">
    <property type="term" value="C:DNA-directed RNA polymerase complex"/>
    <property type="evidence" value="ECO:0007669"/>
    <property type="project" value="UniProtKB-KW"/>
</dbReference>
<dbReference type="GO" id="GO:0005739">
    <property type="term" value="C:mitochondrion"/>
    <property type="evidence" value="ECO:0007669"/>
    <property type="project" value="GOC"/>
</dbReference>
<dbReference type="GO" id="GO:0003677">
    <property type="term" value="F:DNA binding"/>
    <property type="evidence" value="ECO:0007669"/>
    <property type="project" value="UniProtKB-UniRule"/>
</dbReference>
<dbReference type="GO" id="GO:0003899">
    <property type="term" value="F:DNA-directed RNA polymerase activity"/>
    <property type="evidence" value="ECO:0007669"/>
    <property type="project" value="UniProtKB-UniRule"/>
</dbReference>
<dbReference type="GO" id="GO:0032549">
    <property type="term" value="F:ribonucleoside binding"/>
    <property type="evidence" value="ECO:0007669"/>
    <property type="project" value="InterPro"/>
</dbReference>
<dbReference type="GO" id="GO:0006351">
    <property type="term" value="P:DNA-templated transcription"/>
    <property type="evidence" value="ECO:0007669"/>
    <property type="project" value="UniProtKB-UniRule"/>
</dbReference>
<dbReference type="CDD" id="cd00653">
    <property type="entry name" value="RNA_pol_B_RPB2"/>
    <property type="match status" value="1"/>
</dbReference>
<dbReference type="FunFam" id="3.90.1110.10:FF:000009">
    <property type="entry name" value="DNA-directed RNA polymerase subunit beta"/>
    <property type="match status" value="1"/>
</dbReference>
<dbReference type="Gene3D" id="2.40.50.100">
    <property type="match status" value="1"/>
</dbReference>
<dbReference type="Gene3D" id="2.40.50.150">
    <property type="match status" value="1"/>
</dbReference>
<dbReference type="Gene3D" id="3.90.1100.10">
    <property type="match status" value="1"/>
</dbReference>
<dbReference type="Gene3D" id="2.30.150.10">
    <property type="entry name" value="DNA-directed RNA polymerase, beta subunit, external 1 domain"/>
    <property type="match status" value="1"/>
</dbReference>
<dbReference type="Gene3D" id="2.40.270.10">
    <property type="entry name" value="DNA-directed RNA polymerase, subunit 2, domain 6"/>
    <property type="match status" value="2"/>
</dbReference>
<dbReference type="Gene3D" id="3.90.1800.10">
    <property type="entry name" value="RNA polymerase alpha subunit dimerisation domain"/>
    <property type="match status" value="1"/>
</dbReference>
<dbReference type="Gene3D" id="3.90.1110.10">
    <property type="entry name" value="RNA polymerase Rpb2, domain 2"/>
    <property type="match status" value="1"/>
</dbReference>
<dbReference type="HAMAP" id="MF_01321">
    <property type="entry name" value="RNApol_bact_RpoB"/>
    <property type="match status" value="1"/>
</dbReference>
<dbReference type="InterPro" id="IPR042107">
    <property type="entry name" value="DNA-dir_RNA_pol_bsu_ext_1_sf"/>
</dbReference>
<dbReference type="InterPro" id="IPR015712">
    <property type="entry name" value="DNA-dir_RNA_pol_su2"/>
</dbReference>
<dbReference type="InterPro" id="IPR007120">
    <property type="entry name" value="DNA-dir_RNAP_su2_dom"/>
</dbReference>
<dbReference type="InterPro" id="IPR037033">
    <property type="entry name" value="DNA-dir_RNAP_su2_hyb_sf"/>
</dbReference>
<dbReference type="InterPro" id="IPR010243">
    <property type="entry name" value="RNA_pol_bsu_bac"/>
</dbReference>
<dbReference type="InterPro" id="IPR007121">
    <property type="entry name" value="RNA_pol_bsu_CS"/>
</dbReference>
<dbReference type="InterPro" id="IPR007644">
    <property type="entry name" value="RNA_pol_bsu_protrusion"/>
</dbReference>
<dbReference type="InterPro" id="IPR007642">
    <property type="entry name" value="RNA_pol_Rpb2_2"/>
</dbReference>
<dbReference type="InterPro" id="IPR037034">
    <property type="entry name" value="RNA_pol_Rpb2_2_sf"/>
</dbReference>
<dbReference type="InterPro" id="IPR007645">
    <property type="entry name" value="RNA_pol_Rpb2_3"/>
</dbReference>
<dbReference type="InterPro" id="IPR007641">
    <property type="entry name" value="RNA_pol_Rpb2_7"/>
</dbReference>
<dbReference type="InterPro" id="IPR014724">
    <property type="entry name" value="RNA_pol_RPB2_OB-fold"/>
</dbReference>
<dbReference type="NCBIfam" id="NF001616">
    <property type="entry name" value="PRK00405.1"/>
    <property type="match status" value="1"/>
</dbReference>
<dbReference type="PANTHER" id="PTHR20856">
    <property type="entry name" value="DNA-DIRECTED RNA POLYMERASE I SUBUNIT 2"/>
    <property type="match status" value="1"/>
</dbReference>
<dbReference type="Pfam" id="PF04563">
    <property type="entry name" value="RNA_pol_Rpb2_1"/>
    <property type="match status" value="1"/>
</dbReference>
<dbReference type="Pfam" id="PF04561">
    <property type="entry name" value="RNA_pol_Rpb2_2"/>
    <property type="match status" value="1"/>
</dbReference>
<dbReference type="Pfam" id="PF04565">
    <property type="entry name" value="RNA_pol_Rpb2_3"/>
    <property type="match status" value="1"/>
</dbReference>
<dbReference type="Pfam" id="PF00562">
    <property type="entry name" value="RNA_pol_Rpb2_6"/>
    <property type="match status" value="1"/>
</dbReference>
<dbReference type="Pfam" id="PF04560">
    <property type="entry name" value="RNA_pol_Rpb2_7"/>
    <property type="match status" value="1"/>
</dbReference>
<dbReference type="SUPFAM" id="SSF64484">
    <property type="entry name" value="beta and beta-prime subunits of DNA dependent RNA-polymerase"/>
    <property type="match status" value="1"/>
</dbReference>
<dbReference type="PROSITE" id="PS01166">
    <property type="entry name" value="RNA_POL_BETA"/>
    <property type="match status" value="1"/>
</dbReference>
<geneLocation type="chloroplast"/>
<name>RPOB_ACOCI</name>
<evidence type="ECO:0000255" key="1">
    <source>
        <dbReference type="HAMAP-Rule" id="MF_01321"/>
    </source>
</evidence>
<reference key="1">
    <citation type="submission" date="2007-11" db="EMBL/GenBank/DDBJ databases">
        <title>The complete chloroplast genome of Acorus americanus.</title>
        <authorList>
            <person name="Peery R.M."/>
            <person name="Chumley T.W."/>
            <person name="Kuehl J.V."/>
            <person name="Boore J.L."/>
            <person name="Raubeson L.A."/>
        </authorList>
    </citation>
    <scope>NUCLEOTIDE SEQUENCE [LARGE SCALE GENOMIC DNA]</scope>
</reference>
<feature type="chain" id="PRO_0000329197" description="DNA-directed RNA polymerase subunit beta">
    <location>
        <begin position="1"/>
        <end position="1083"/>
    </location>
</feature>
<proteinExistence type="inferred from homology"/>
<keyword id="KW-0150">Chloroplast</keyword>
<keyword id="KW-0240">DNA-directed RNA polymerase</keyword>
<keyword id="KW-0548">Nucleotidyltransferase</keyword>
<keyword id="KW-0934">Plastid</keyword>
<keyword id="KW-0804">Transcription</keyword>
<keyword id="KW-0808">Transferase</keyword>
<accession>A9LYH7</accession>
<organism>
    <name type="scientific">Acorus calamus var. americanus</name>
    <name type="common">American sweet flag</name>
    <name type="synonym">Acorus americanus</name>
    <dbReference type="NCBI Taxonomy" id="263995"/>
    <lineage>
        <taxon>Eukaryota</taxon>
        <taxon>Viridiplantae</taxon>
        <taxon>Streptophyta</taxon>
        <taxon>Embryophyta</taxon>
        <taxon>Tracheophyta</taxon>
        <taxon>Spermatophyta</taxon>
        <taxon>Magnoliopsida</taxon>
        <taxon>Liliopsida</taxon>
        <taxon>Acoraceae</taxon>
        <taxon>Acorus</taxon>
    </lineage>
</organism>
<comment type="function">
    <text evidence="1">DNA-dependent RNA polymerase catalyzes the transcription of DNA into RNA using the four ribonucleoside triphosphates as substrates.</text>
</comment>
<comment type="catalytic activity">
    <reaction evidence="1">
        <text>RNA(n) + a ribonucleoside 5'-triphosphate = RNA(n+1) + diphosphate</text>
        <dbReference type="Rhea" id="RHEA:21248"/>
        <dbReference type="Rhea" id="RHEA-COMP:14527"/>
        <dbReference type="Rhea" id="RHEA-COMP:17342"/>
        <dbReference type="ChEBI" id="CHEBI:33019"/>
        <dbReference type="ChEBI" id="CHEBI:61557"/>
        <dbReference type="ChEBI" id="CHEBI:140395"/>
        <dbReference type="EC" id="2.7.7.6"/>
    </reaction>
</comment>
<comment type="subunit">
    <text evidence="1">In plastids the minimal PEP RNA polymerase catalytic core is composed of four subunits: alpha, beta, beta', and beta''. When a (nuclear-encoded) sigma factor is associated with the core the holoenzyme is formed, which can initiate transcription.</text>
</comment>
<comment type="subcellular location">
    <subcellularLocation>
        <location>Plastid</location>
        <location>Chloroplast</location>
    </subcellularLocation>
</comment>
<comment type="similarity">
    <text evidence="1">Belongs to the RNA polymerase beta chain family.</text>
</comment>
<gene>
    <name evidence="1" type="primary">rpoB</name>
</gene>